<reference key="1">
    <citation type="journal article" date="1989" name="Arch. Biochem. Biophys.">
        <title>Homology of the D-galactose-specific lectins from Artocarpus integrifolia and Maclura pomifera and the role of an unusual small polypeptide subunit.</title>
        <authorList>
            <person name="Young N.M."/>
            <person name="Johnston R.A.Z."/>
            <person name="Szabo A.G."/>
            <person name="Watson D.C."/>
        </authorList>
    </citation>
    <scope>PROTEIN SEQUENCE</scope>
    <source>
        <tissue>Seed</tissue>
    </source>
</reference>
<reference key="2">
    <citation type="journal article" date="1992" name="Biochem. J.">
        <title>Primary structure of a Thomsen-Friedenreich-antigen-specific lectin, jacalin [Artocarpus integrifolia (jack fruit) agglutinin]. Evidence for the presence of an internal repeat.</title>
        <authorList>
            <person name="Mahanta S.K."/>
            <person name="Sanker S."/>
            <person name="Prasad Rao N.V.S.A.V."/>
            <person name="Swamy M.J."/>
            <person name="Surolia A."/>
        </authorList>
    </citation>
    <scope>PROTEIN SEQUENCE</scope>
</reference>
<reference key="3">
    <citation type="journal article" date="1993" name="Biochim. Biophys. Acta">
        <title>The alpha- and beta-subunits of the jacalins are cleavage products from a 17-kDa precursor.</title>
        <authorList>
            <person name="Ngoc L.D."/>
            <person name="Brillard M."/>
            <person name="Hoebeke J."/>
        </authorList>
    </citation>
    <scope>PROTEIN SEQUENCE</scope>
</reference>
<reference key="4">
    <citation type="journal article" date="1996" name="Nat. Struct. Biol.">
        <title>A novel mode of carbohydrate recognition in jacalin, a Moraceae plant lectin with a beta-prism fold.</title>
        <authorList>
            <person name="Sakaranarayanan R."/>
            <person name="Sekar S."/>
            <person name="Banerjee R."/>
            <person name="Sharma V."/>
            <person name="Surolia A."/>
            <person name="Vijayan M."/>
        </authorList>
    </citation>
    <scope>X-RAY CRYSTALLOGRAPHY (2.43 ANGSTROMS)</scope>
</reference>
<comment type="function">
    <text>D-galactose-specific lectin, binds the T-antigen structure Gal-beta1,3-GalNAc (Thomsen-Friedenreich-antigen-specific lectin). Potent and selective stimulant of distinct T- and B-cell functions. Shows a unique ability to specifically recognize IgA-1 from human serum.</text>
</comment>
<comment type="subunit">
    <text>Tetramer of four alpha chains associated with two or four beta chains.</text>
</comment>
<comment type="similarity">
    <text evidence="2">Belongs to the jacalin lectin family.</text>
</comment>
<dbReference type="PDB" id="1JAC">
    <property type="method" value="X-ray"/>
    <property type="resolution" value="2.43 A"/>
    <property type="chains" value="B/D/F/H=1-20"/>
</dbReference>
<dbReference type="PDB" id="1KU8">
    <property type="method" value="X-ray"/>
    <property type="resolution" value="1.75 A"/>
    <property type="chains" value="B/D/F/H=1-18"/>
</dbReference>
<dbReference type="PDB" id="1KUJ">
    <property type="method" value="X-ray"/>
    <property type="resolution" value="2.00 A"/>
    <property type="chains" value="B/D/F/H=1-18"/>
</dbReference>
<dbReference type="PDBsum" id="1JAC"/>
<dbReference type="PDBsum" id="1KU8"/>
<dbReference type="PDBsum" id="1KUJ"/>
<dbReference type="SMR" id="P18671"/>
<dbReference type="GO" id="GO:0030246">
    <property type="term" value="F:carbohydrate binding"/>
    <property type="evidence" value="ECO:0000314"/>
    <property type="project" value="UniProtKB"/>
</dbReference>
<dbReference type="GO" id="GO:0019862">
    <property type="term" value="F:IgA binding"/>
    <property type="evidence" value="ECO:0000250"/>
    <property type="project" value="UniProtKB"/>
</dbReference>
<protein>
    <recommendedName>
        <fullName>Agglutinin beta-1 chain</fullName>
    </recommendedName>
    <alternativeName>
        <fullName>Jacalin beta-1 chain</fullName>
    </alternativeName>
</protein>
<accession>P18671</accession>
<proteinExistence type="evidence at protein level"/>
<evidence type="ECO:0000256" key="1">
    <source>
        <dbReference type="SAM" id="MobiDB-lite"/>
    </source>
</evidence>
<evidence type="ECO:0000305" key="2"/>
<evidence type="ECO:0007829" key="3">
    <source>
        <dbReference type="PDB" id="1KU8"/>
    </source>
</evidence>
<organism>
    <name type="scientific">Artocarpus integer</name>
    <name type="common">Jack fruit</name>
    <name type="synonym">Artocarpus integrifolia</name>
    <dbReference type="NCBI Taxonomy" id="3490"/>
    <lineage>
        <taxon>Eukaryota</taxon>
        <taxon>Viridiplantae</taxon>
        <taxon>Streptophyta</taxon>
        <taxon>Embryophyta</taxon>
        <taxon>Tracheophyta</taxon>
        <taxon>Spermatophyta</taxon>
        <taxon>Magnoliopsida</taxon>
        <taxon>eudicotyledons</taxon>
        <taxon>Gunneridae</taxon>
        <taxon>Pentapetalae</taxon>
        <taxon>rosids</taxon>
        <taxon>fabids</taxon>
        <taxon>Rosales</taxon>
        <taxon>Moraceae</taxon>
        <taxon>Artocarpeae</taxon>
        <taxon>Artocarpus</taxon>
    </lineage>
</organism>
<feature type="peptide" id="PRO_0000044032" description="Agglutinin beta-1 chain">
    <location>
        <begin position="1"/>
        <end position="20"/>
    </location>
</feature>
<feature type="region of interest" description="Disordered" evidence="1">
    <location>
        <begin position="1"/>
        <end position="20"/>
    </location>
</feature>
<feature type="compositionally biased region" description="Polar residues" evidence="1">
    <location>
        <begin position="1"/>
        <end position="11"/>
    </location>
</feature>
<feature type="strand" evidence="3">
    <location>
        <begin position="10"/>
        <end position="16"/>
    </location>
</feature>
<keyword id="KW-0002">3D-structure</keyword>
<keyword id="KW-0903">Direct protein sequencing</keyword>
<keyword id="KW-0388">IgA-binding protein</keyword>
<keyword id="KW-0430">Lectin</keyword>
<sequence>NEQSGKSQTVIVGSWGAKVS</sequence>
<name>LECB1_ARTIN</name>